<comment type="function">
    <text evidence="1">Specifically methylates the N4 position of cytidine in position 1402 (C1402) of 16S rRNA.</text>
</comment>
<comment type="catalytic activity">
    <reaction evidence="1">
        <text>cytidine(1402) in 16S rRNA + S-adenosyl-L-methionine = N(4)-methylcytidine(1402) in 16S rRNA + S-adenosyl-L-homocysteine + H(+)</text>
        <dbReference type="Rhea" id="RHEA:42928"/>
        <dbReference type="Rhea" id="RHEA-COMP:10286"/>
        <dbReference type="Rhea" id="RHEA-COMP:10287"/>
        <dbReference type="ChEBI" id="CHEBI:15378"/>
        <dbReference type="ChEBI" id="CHEBI:57856"/>
        <dbReference type="ChEBI" id="CHEBI:59789"/>
        <dbReference type="ChEBI" id="CHEBI:74506"/>
        <dbReference type="ChEBI" id="CHEBI:82748"/>
        <dbReference type="EC" id="2.1.1.199"/>
    </reaction>
</comment>
<comment type="subcellular location">
    <subcellularLocation>
        <location evidence="1">Cytoplasm</location>
    </subcellularLocation>
</comment>
<comment type="similarity">
    <text evidence="1">Belongs to the methyltransferase superfamily. RsmH family.</text>
</comment>
<keyword id="KW-0963">Cytoplasm</keyword>
<keyword id="KW-0489">Methyltransferase</keyword>
<keyword id="KW-1185">Reference proteome</keyword>
<keyword id="KW-0698">rRNA processing</keyword>
<keyword id="KW-0949">S-adenosyl-L-methionine</keyword>
<keyword id="KW-0808">Transferase</keyword>
<proteinExistence type="inferred from homology"/>
<sequence length="312" mass="34547">MSDSPKHITVLLHEAVDGLAIKPNGIYVDGTFGRGGHSRLILSKLGEQGRLIAIDRDPRAIAEANTITDPRFQIVHSAFSSIPDICDELNLVGKIDGILLDLGVSSPQLDEAERGFSFMRDGPLDMRMDTTKGLSAMEWLAQVSVDDLAWVLKEFGEERFAKRIAQAVVSYNKSATEKISRTLQLAQIIADVVPFKDKHKHPATRSFQAIRIYINSELDELEKALNSALTVLAPEGRLSIISFHSLEDRMVKQFMRKQSKGETVPKGLPILESELNKNIPLKTVGKAIMPSEAEIEANPRSRSAVLRVAEKR</sequence>
<organism>
    <name type="scientific">Glaesserella parasuis serovar 5 (strain SH0165)</name>
    <name type="common">Haemophilus parasuis</name>
    <dbReference type="NCBI Taxonomy" id="557723"/>
    <lineage>
        <taxon>Bacteria</taxon>
        <taxon>Pseudomonadati</taxon>
        <taxon>Pseudomonadota</taxon>
        <taxon>Gammaproteobacteria</taxon>
        <taxon>Pasteurellales</taxon>
        <taxon>Pasteurellaceae</taxon>
        <taxon>Glaesserella</taxon>
    </lineage>
</organism>
<protein>
    <recommendedName>
        <fullName evidence="1">Ribosomal RNA small subunit methyltransferase H</fullName>
        <ecNumber evidence="1">2.1.1.199</ecNumber>
    </recommendedName>
    <alternativeName>
        <fullName evidence="1">16S rRNA m(4)C1402 methyltransferase</fullName>
    </alternativeName>
    <alternativeName>
        <fullName evidence="1">rRNA (cytosine-N(4)-)-methyltransferase RsmH</fullName>
    </alternativeName>
</protein>
<dbReference type="EC" id="2.1.1.199" evidence="1"/>
<dbReference type="EMBL" id="CP001321">
    <property type="protein sequence ID" value="ACL31810.1"/>
    <property type="molecule type" value="Genomic_DNA"/>
</dbReference>
<dbReference type="RefSeq" id="WP_012621557.1">
    <property type="nucleotide sequence ID" value="NC_011852.1"/>
</dbReference>
<dbReference type="SMR" id="B8F3A8"/>
<dbReference type="STRING" id="557723.HAPS_0111"/>
<dbReference type="KEGG" id="hap:HAPS_0111"/>
<dbReference type="PATRIC" id="fig|557723.8.peg.116"/>
<dbReference type="HOGENOM" id="CLU_038422_2_0_6"/>
<dbReference type="Proteomes" id="UP000006743">
    <property type="component" value="Chromosome"/>
</dbReference>
<dbReference type="GO" id="GO:0005737">
    <property type="term" value="C:cytoplasm"/>
    <property type="evidence" value="ECO:0007669"/>
    <property type="project" value="UniProtKB-SubCell"/>
</dbReference>
<dbReference type="GO" id="GO:0071424">
    <property type="term" value="F:rRNA (cytosine-N4-)-methyltransferase activity"/>
    <property type="evidence" value="ECO:0007669"/>
    <property type="project" value="UniProtKB-UniRule"/>
</dbReference>
<dbReference type="GO" id="GO:0070475">
    <property type="term" value="P:rRNA base methylation"/>
    <property type="evidence" value="ECO:0007669"/>
    <property type="project" value="UniProtKB-UniRule"/>
</dbReference>
<dbReference type="FunFam" id="1.10.150.170:FF:000001">
    <property type="entry name" value="Ribosomal RNA small subunit methyltransferase H"/>
    <property type="match status" value="1"/>
</dbReference>
<dbReference type="Gene3D" id="1.10.150.170">
    <property type="entry name" value="Putative methyltransferase TM0872, insert domain"/>
    <property type="match status" value="1"/>
</dbReference>
<dbReference type="Gene3D" id="3.40.50.150">
    <property type="entry name" value="Vaccinia Virus protein VP39"/>
    <property type="match status" value="1"/>
</dbReference>
<dbReference type="HAMAP" id="MF_01007">
    <property type="entry name" value="16SrRNA_methyltr_H"/>
    <property type="match status" value="1"/>
</dbReference>
<dbReference type="InterPro" id="IPR002903">
    <property type="entry name" value="RsmH"/>
</dbReference>
<dbReference type="InterPro" id="IPR023397">
    <property type="entry name" value="SAM-dep_MeTrfase_MraW_recog"/>
</dbReference>
<dbReference type="InterPro" id="IPR029063">
    <property type="entry name" value="SAM-dependent_MTases_sf"/>
</dbReference>
<dbReference type="NCBIfam" id="TIGR00006">
    <property type="entry name" value="16S rRNA (cytosine(1402)-N(4))-methyltransferase RsmH"/>
    <property type="match status" value="1"/>
</dbReference>
<dbReference type="PANTHER" id="PTHR11265:SF0">
    <property type="entry name" value="12S RRNA N4-METHYLCYTIDINE METHYLTRANSFERASE"/>
    <property type="match status" value="1"/>
</dbReference>
<dbReference type="PANTHER" id="PTHR11265">
    <property type="entry name" value="S-ADENOSYL-METHYLTRANSFERASE MRAW"/>
    <property type="match status" value="1"/>
</dbReference>
<dbReference type="Pfam" id="PF01795">
    <property type="entry name" value="Methyltransf_5"/>
    <property type="match status" value="1"/>
</dbReference>
<dbReference type="PIRSF" id="PIRSF004486">
    <property type="entry name" value="MraW"/>
    <property type="match status" value="1"/>
</dbReference>
<dbReference type="SUPFAM" id="SSF81799">
    <property type="entry name" value="Putative methyltransferase TM0872, insert domain"/>
    <property type="match status" value="1"/>
</dbReference>
<dbReference type="SUPFAM" id="SSF53335">
    <property type="entry name" value="S-adenosyl-L-methionine-dependent methyltransferases"/>
    <property type="match status" value="1"/>
</dbReference>
<evidence type="ECO:0000255" key="1">
    <source>
        <dbReference type="HAMAP-Rule" id="MF_01007"/>
    </source>
</evidence>
<name>RSMH_GLAP5</name>
<reference key="1">
    <citation type="journal article" date="2009" name="J. Bacteriol.">
        <title>Complete genome sequence of Haemophilus parasuis SH0165.</title>
        <authorList>
            <person name="Yue M."/>
            <person name="Yang F."/>
            <person name="Yang J."/>
            <person name="Bei W."/>
            <person name="Cai X."/>
            <person name="Chen L."/>
            <person name="Dong J."/>
            <person name="Zhou R."/>
            <person name="Jin M."/>
            <person name="Jin Q."/>
            <person name="Chen H."/>
        </authorList>
    </citation>
    <scope>NUCLEOTIDE SEQUENCE [LARGE SCALE GENOMIC DNA]</scope>
    <source>
        <strain>SH0165</strain>
    </source>
</reference>
<accession>B8F3A8</accession>
<gene>
    <name evidence="1" type="primary">rsmH</name>
    <name type="synonym">mraW</name>
    <name type="ordered locus">HAPS_0111</name>
</gene>
<feature type="chain" id="PRO_0000386919" description="Ribosomal RNA small subunit methyltransferase H">
    <location>
        <begin position="1"/>
        <end position="312"/>
    </location>
</feature>
<feature type="binding site" evidence="1">
    <location>
        <begin position="35"/>
        <end position="37"/>
    </location>
    <ligand>
        <name>S-adenosyl-L-methionine</name>
        <dbReference type="ChEBI" id="CHEBI:59789"/>
    </ligand>
</feature>
<feature type="binding site" evidence="1">
    <location>
        <position position="55"/>
    </location>
    <ligand>
        <name>S-adenosyl-L-methionine</name>
        <dbReference type="ChEBI" id="CHEBI:59789"/>
    </ligand>
</feature>
<feature type="binding site" evidence="1">
    <location>
        <position position="79"/>
    </location>
    <ligand>
        <name>S-adenosyl-L-methionine</name>
        <dbReference type="ChEBI" id="CHEBI:59789"/>
    </ligand>
</feature>
<feature type="binding site" evidence="1">
    <location>
        <position position="101"/>
    </location>
    <ligand>
        <name>S-adenosyl-L-methionine</name>
        <dbReference type="ChEBI" id="CHEBI:59789"/>
    </ligand>
</feature>
<feature type="binding site" evidence="1">
    <location>
        <position position="108"/>
    </location>
    <ligand>
        <name>S-adenosyl-L-methionine</name>
        <dbReference type="ChEBI" id="CHEBI:59789"/>
    </ligand>
</feature>